<evidence type="ECO:0000255" key="1">
    <source>
        <dbReference type="HAMAP-Rule" id="MF_01398"/>
    </source>
</evidence>
<reference key="1">
    <citation type="journal article" date="2005" name="Genome Res.">
        <title>Coping with cold: the genome of the versatile marine Antarctica bacterium Pseudoalteromonas haloplanktis TAC125.</title>
        <authorList>
            <person name="Medigue C."/>
            <person name="Krin E."/>
            <person name="Pascal G."/>
            <person name="Barbe V."/>
            <person name="Bernsel A."/>
            <person name="Bertin P.N."/>
            <person name="Cheung F."/>
            <person name="Cruveiller S."/>
            <person name="D'Amico S."/>
            <person name="Duilio A."/>
            <person name="Fang G."/>
            <person name="Feller G."/>
            <person name="Ho C."/>
            <person name="Mangenot S."/>
            <person name="Marino G."/>
            <person name="Nilsson J."/>
            <person name="Parrilli E."/>
            <person name="Rocha E.P.C."/>
            <person name="Rouy Z."/>
            <person name="Sekowska A."/>
            <person name="Tutino M.L."/>
            <person name="Vallenet D."/>
            <person name="von Heijne G."/>
            <person name="Danchin A."/>
        </authorList>
    </citation>
    <scope>NUCLEOTIDE SEQUENCE [LARGE SCALE GENOMIC DNA]</scope>
    <source>
        <strain>TAC 125</strain>
    </source>
</reference>
<gene>
    <name evidence="1" type="primary">atpF</name>
    <name type="ordered locus">PSHAa3012</name>
</gene>
<dbReference type="EMBL" id="CR954246">
    <property type="protein sequence ID" value="CAI88041.1"/>
    <property type="molecule type" value="Genomic_DNA"/>
</dbReference>
<dbReference type="SMR" id="Q3IK46"/>
<dbReference type="STRING" id="326442.PSHAa3012"/>
<dbReference type="KEGG" id="pha:PSHAa3012"/>
<dbReference type="eggNOG" id="COG0711">
    <property type="taxonomic scope" value="Bacteria"/>
</dbReference>
<dbReference type="HOGENOM" id="CLU_079215_4_5_6"/>
<dbReference type="BioCyc" id="PHAL326442:PSHA_RS14780-MONOMER"/>
<dbReference type="Proteomes" id="UP000006843">
    <property type="component" value="Chromosome I"/>
</dbReference>
<dbReference type="GO" id="GO:0005886">
    <property type="term" value="C:plasma membrane"/>
    <property type="evidence" value="ECO:0007669"/>
    <property type="project" value="UniProtKB-SubCell"/>
</dbReference>
<dbReference type="GO" id="GO:0045259">
    <property type="term" value="C:proton-transporting ATP synthase complex"/>
    <property type="evidence" value="ECO:0007669"/>
    <property type="project" value="UniProtKB-KW"/>
</dbReference>
<dbReference type="GO" id="GO:0046933">
    <property type="term" value="F:proton-transporting ATP synthase activity, rotational mechanism"/>
    <property type="evidence" value="ECO:0007669"/>
    <property type="project" value="UniProtKB-UniRule"/>
</dbReference>
<dbReference type="GO" id="GO:0046961">
    <property type="term" value="F:proton-transporting ATPase activity, rotational mechanism"/>
    <property type="evidence" value="ECO:0007669"/>
    <property type="project" value="TreeGrafter"/>
</dbReference>
<dbReference type="CDD" id="cd06503">
    <property type="entry name" value="ATP-synt_Fo_b"/>
    <property type="match status" value="1"/>
</dbReference>
<dbReference type="Gene3D" id="6.10.250.1580">
    <property type="match status" value="1"/>
</dbReference>
<dbReference type="HAMAP" id="MF_01398">
    <property type="entry name" value="ATP_synth_b_bprime"/>
    <property type="match status" value="1"/>
</dbReference>
<dbReference type="InterPro" id="IPR028987">
    <property type="entry name" value="ATP_synth_B-like_membr_sf"/>
</dbReference>
<dbReference type="InterPro" id="IPR002146">
    <property type="entry name" value="ATP_synth_b/b'su_bac/chlpt"/>
</dbReference>
<dbReference type="InterPro" id="IPR005864">
    <property type="entry name" value="ATP_synth_F0_bsu_bac"/>
</dbReference>
<dbReference type="InterPro" id="IPR050059">
    <property type="entry name" value="ATP_synthase_B_chain"/>
</dbReference>
<dbReference type="NCBIfam" id="TIGR01144">
    <property type="entry name" value="ATP_synt_b"/>
    <property type="match status" value="1"/>
</dbReference>
<dbReference type="NCBIfam" id="NF004411">
    <property type="entry name" value="PRK05759.1-2"/>
    <property type="match status" value="1"/>
</dbReference>
<dbReference type="NCBIfam" id="NF004413">
    <property type="entry name" value="PRK05759.1-4"/>
    <property type="match status" value="1"/>
</dbReference>
<dbReference type="PANTHER" id="PTHR33445:SF1">
    <property type="entry name" value="ATP SYNTHASE SUBUNIT B"/>
    <property type="match status" value="1"/>
</dbReference>
<dbReference type="PANTHER" id="PTHR33445">
    <property type="entry name" value="ATP SYNTHASE SUBUNIT B', CHLOROPLASTIC"/>
    <property type="match status" value="1"/>
</dbReference>
<dbReference type="Pfam" id="PF00430">
    <property type="entry name" value="ATP-synt_B"/>
    <property type="match status" value="1"/>
</dbReference>
<dbReference type="SUPFAM" id="SSF81573">
    <property type="entry name" value="F1F0 ATP synthase subunit B, membrane domain"/>
    <property type="match status" value="1"/>
</dbReference>
<comment type="function">
    <text evidence="1">F(1)F(0) ATP synthase produces ATP from ADP in the presence of a proton or sodium gradient. F-type ATPases consist of two structural domains, F(1) containing the extramembraneous catalytic core and F(0) containing the membrane proton channel, linked together by a central stalk and a peripheral stalk. During catalysis, ATP synthesis in the catalytic domain of F(1) is coupled via a rotary mechanism of the central stalk subunits to proton translocation.</text>
</comment>
<comment type="function">
    <text evidence="1">Component of the F(0) channel, it forms part of the peripheral stalk, linking F(1) to F(0).</text>
</comment>
<comment type="subunit">
    <text evidence="1">F-type ATPases have 2 components, F(1) - the catalytic core - and F(0) - the membrane proton channel. F(1) has five subunits: alpha(3), beta(3), gamma(1), delta(1), epsilon(1). F(0) has three main subunits: a(1), b(2) and c(10-14). The alpha and beta chains form an alternating ring which encloses part of the gamma chain. F(1) is attached to F(0) by a central stalk formed by the gamma and epsilon chains, while a peripheral stalk is formed by the delta and b chains.</text>
</comment>
<comment type="subcellular location">
    <subcellularLocation>
        <location evidence="1">Cell inner membrane</location>
        <topology evidence="1">Single-pass membrane protein</topology>
    </subcellularLocation>
</comment>
<comment type="similarity">
    <text evidence="1">Belongs to the ATPase B chain family.</text>
</comment>
<organism>
    <name type="scientific">Pseudoalteromonas translucida (strain TAC 125)</name>
    <dbReference type="NCBI Taxonomy" id="326442"/>
    <lineage>
        <taxon>Bacteria</taxon>
        <taxon>Pseudomonadati</taxon>
        <taxon>Pseudomonadota</taxon>
        <taxon>Gammaproteobacteria</taxon>
        <taxon>Alteromonadales</taxon>
        <taxon>Pseudoalteromonadaceae</taxon>
        <taxon>Pseudoalteromonas</taxon>
    </lineage>
</organism>
<feature type="chain" id="PRO_0000368682" description="ATP synthase subunit b">
    <location>
        <begin position="1"/>
        <end position="156"/>
    </location>
</feature>
<feature type="transmembrane region" description="Helical" evidence="1">
    <location>
        <begin position="7"/>
        <end position="27"/>
    </location>
</feature>
<keyword id="KW-0066">ATP synthesis</keyword>
<keyword id="KW-0997">Cell inner membrane</keyword>
<keyword id="KW-1003">Cell membrane</keyword>
<keyword id="KW-0138">CF(0)</keyword>
<keyword id="KW-0375">Hydrogen ion transport</keyword>
<keyword id="KW-0406">Ion transport</keyword>
<keyword id="KW-0472">Membrane</keyword>
<keyword id="KW-1185">Reference proteome</keyword>
<keyword id="KW-0812">Transmembrane</keyword>
<keyword id="KW-1133">Transmembrane helix</keyword>
<keyword id="KW-0813">Transport</keyword>
<sequence length="156" mass="17426">MNLNATLIGELIAFTVFVLFCMKFVWPPLNGAIEARQKKIEDGLAASDRAEKDLELAQKKAAEQLKDAKVQAADIIDQAKKRAVLIVDEETVRGQQEREKIIAQGHSEIESERNRVTEELRKQVATLAVVGAQRILEREINQAAHSDIVEKLVAEL</sequence>
<protein>
    <recommendedName>
        <fullName evidence="1">ATP synthase subunit b</fullName>
    </recommendedName>
    <alternativeName>
        <fullName evidence="1">ATP synthase F(0) sector subunit b</fullName>
    </alternativeName>
    <alternativeName>
        <fullName evidence="1">ATPase subunit I</fullName>
    </alternativeName>
    <alternativeName>
        <fullName evidence="1">F-type ATPase subunit b</fullName>
        <shortName evidence="1">F-ATPase subunit b</shortName>
    </alternativeName>
</protein>
<name>ATPF_PSET1</name>
<accession>Q3IK46</accession>
<proteinExistence type="inferred from homology"/>